<organism>
    <name type="scientific">Clostridium beijerinckii (strain ATCC 51743 / NCIMB 8052)</name>
    <name type="common">Clostridium acetobutylicum</name>
    <dbReference type="NCBI Taxonomy" id="290402"/>
    <lineage>
        <taxon>Bacteria</taxon>
        <taxon>Bacillati</taxon>
        <taxon>Bacillota</taxon>
        <taxon>Clostridia</taxon>
        <taxon>Eubacteriales</taxon>
        <taxon>Clostridiaceae</taxon>
        <taxon>Clostridium</taxon>
    </lineage>
</organism>
<comment type="function">
    <text evidence="1">This protein binds specifically to 23S rRNA; its binding is stimulated by other ribosomal proteins, e.g. L4, L17, and L20. It is important during the early stages of 50S assembly. It makes multiple contacts with different domains of the 23S rRNA in the assembled 50S subunit and ribosome (By similarity).</text>
</comment>
<comment type="function">
    <text evidence="1">The globular domain of the protein is located near the polypeptide exit tunnel on the outside of the subunit, while an extended beta-hairpin is found that lines the wall of the exit tunnel in the center of the 70S ribosome.</text>
</comment>
<comment type="subunit">
    <text evidence="1">Part of the 50S ribosomal subunit.</text>
</comment>
<comment type="similarity">
    <text evidence="1">Belongs to the universal ribosomal protein uL22 family.</text>
</comment>
<dbReference type="EMBL" id="CP000721">
    <property type="protein sequence ID" value="ABR32346.1"/>
    <property type="molecule type" value="Genomic_DNA"/>
</dbReference>
<dbReference type="RefSeq" id="WP_009167817.1">
    <property type="nucleotide sequence ID" value="NC_009617.1"/>
</dbReference>
<dbReference type="SMR" id="A6LPR6"/>
<dbReference type="GeneID" id="66343046"/>
<dbReference type="KEGG" id="cbe:Cbei_0156"/>
<dbReference type="eggNOG" id="COG0091">
    <property type="taxonomic scope" value="Bacteria"/>
</dbReference>
<dbReference type="HOGENOM" id="CLU_083987_3_3_9"/>
<dbReference type="Proteomes" id="UP000000565">
    <property type="component" value="Chromosome"/>
</dbReference>
<dbReference type="GO" id="GO:0022625">
    <property type="term" value="C:cytosolic large ribosomal subunit"/>
    <property type="evidence" value="ECO:0007669"/>
    <property type="project" value="TreeGrafter"/>
</dbReference>
<dbReference type="GO" id="GO:0019843">
    <property type="term" value="F:rRNA binding"/>
    <property type="evidence" value="ECO:0007669"/>
    <property type="project" value="UniProtKB-UniRule"/>
</dbReference>
<dbReference type="GO" id="GO:0003735">
    <property type="term" value="F:structural constituent of ribosome"/>
    <property type="evidence" value="ECO:0007669"/>
    <property type="project" value="InterPro"/>
</dbReference>
<dbReference type="GO" id="GO:0006412">
    <property type="term" value="P:translation"/>
    <property type="evidence" value="ECO:0007669"/>
    <property type="project" value="UniProtKB-UniRule"/>
</dbReference>
<dbReference type="CDD" id="cd00336">
    <property type="entry name" value="Ribosomal_L22"/>
    <property type="match status" value="1"/>
</dbReference>
<dbReference type="Gene3D" id="3.90.470.10">
    <property type="entry name" value="Ribosomal protein L22/L17"/>
    <property type="match status" value="1"/>
</dbReference>
<dbReference type="HAMAP" id="MF_01331_B">
    <property type="entry name" value="Ribosomal_uL22_B"/>
    <property type="match status" value="1"/>
</dbReference>
<dbReference type="InterPro" id="IPR001063">
    <property type="entry name" value="Ribosomal_uL22"/>
</dbReference>
<dbReference type="InterPro" id="IPR005727">
    <property type="entry name" value="Ribosomal_uL22_bac/chlpt-type"/>
</dbReference>
<dbReference type="InterPro" id="IPR047867">
    <property type="entry name" value="Ribosomal_uL22_bac/org-type"/>
</dbReference>
<dbReference type="InterPro" id="IPR018260">
    <property type="entry name" value="Ribosomal_uL22_CS"/>
</dbReference>
<dbReference type="InterPro" id="IPR036394">
    <property type="entry name" value="Ribosomal_uL22_sf"/>
</dbReference>
<dbReference type="NCBIfam" id="TIGR01044">
    <property type="entry name" value="rplV_bact"/>
    <property type="match status" value="1"/>
</dbReference>
<dbReference type="PANTHER" id="PTHR13501">
    <property type="entry name" value="CHLOROPLAST 50S RIBOSOMAL PROTEIN L22-RELATED"/>
    <property type="match status" value="1"/>
</dbReference>
<dbReference type="PANTHER" id="PTHR13501:SF8">
    <property type="entry name" value="LARGE RIBOSOMAL SUBUNIT PROTEIN UL22M"/>
    <property type="match status" value="1"/>
</dbReference>
<dbReference type="Pfam" id="PF00237">
    <property type="entry name" value="Ribosomal_L22"/>
    <property type="match status" value="1"/>
</dbReference>
<dbReference type="SUPFAM" id="SSF54843">
    <property type="entry name" value="Ribosomal protein L22"/>
    <property type="match status" value="1"/>
</dbReference>
<dbReference type="PROSITE" id="PS00464">
    <property type="entry name" value="RIBOSOMAL_L22"/>
    <property type="match status" value="1"/>
</dbReference>
<name>RL22_CLOB8</name>
<protein>
    <recommendedName>
        <fullName evidence="1">Large ribosomal subunit protein uL22</fullName>
    </recommendedName>
    <alternativeName>
        <fullName evidence="2">50S ribosomal protein L22</fullName>
    </alternativeName>
</protein>
<feature type="chain" id="PRO_1000086548" description="Large ribosomal subunit protein uL22">
    <location>
        <begin position="1"/>
        <end position="111"/>
    </location>
</feature>
<reference key="1">
    <citation type="submission" date="2007-06" db="EMBL/GenBank/DDBJ databases">
        <title>Complete sequence of Clostridium beijerinckii NCIMB 8052.</title>
        <authorList>
            <consortium name="US DOE Joint Genome Institute"/>
            <person name="Copeland A."/>
            <person name="Lucas S."/>
            <person name="Lapidus A."/>
            <person name="Barry K."/>
            <person name="Detter J.C."/>
            <person name="Glavina del Rio T."/>
            <person name="Hammon N."/>
            <person name="Israni S."/>
            <person name="Dalin E."/>
            <person name="Tice H."/>
            <person name="Pitluck S."/>
            <person name="Sims D."/>
            <person name="Brettin T."/>
            <person name="Bruce D."/>
            <person name="Tapia R."/>
            <person name="Brainard J."/>
            <person name="Schmutz J."/>
            <person name="Larimer F."/>
            <person name="Land M."/>
            <person name="Hauser L."/>
            <person name="Kyrpides N."/>
            <person name="Mikhailova N."/>
            <person name="Bennet G."/>
            <person name="Cann I."/>
            <person name="Chen J.-S."/>
            <person name="Contreras A.L."/>
            <person name="Jones D."/>
            <person name="Kashket E."/>
            <person name="Mitchell W."/>
            <person name="Stoddard S."/>
            <person name="Schwarz W."/>
            <person name="Qureshi N."/>
            <person name="Young M."/>
            <person name="Shi Z."/>
            <person name="Ezeji T."/>
            <person name="White B."/>
            <person name="Blaschek H."/>
            <person name="Richardson P."/>
        </authorList>
    </citation>
    <scope>NUCLEOTIDE SEQUENCE [LARGE SCALE GENOMIC DNA]</scope>
    <source>
        <strain>ATCC 51743 / NCIMB 8052</strain>
    </source>
</reference>
<accession>A6LPR6</accession>
<keyword id="KW-0687">Ribonucleoprotein</keyword>
<keyword id="KW-0689">Ribosomal protein</keyword>
<keyword id="KW-0694">RNA-binding</keyword>
<keyword id="KW-0699">rRNA-binding</keyword>
<evidence type="ECO:0000255" key="1">
    <source>
        <dbReference type="HAMAP-Rule" id="MF_01331"/>
    </source>
</evidence>
<evidence type="ECO:0000305" key="2"/>
<proteinExistence type="inferred from homology"/>
<sequence length="111" mass="12287">MEARAIAKYIRMSPTKVGVILDLIRGKQVNEAFAILQYTPREAAVVINKVLKSAVANAENNLELNADNLYVSECFVGQGSTLKRFQPHAQGRAFKILKKTSNITVVVKERA</sequence>
<gene>
    <name evidence="1" type="primary">rplV</name>
    <name type="ordered locus">Cbei_0156</name>
</gene>